<feature type="chain" id="PRO_0000329408" description="GATOR2 complex protein MIOS-A">
    <location>
        <begin position="1"/>
        <end position="880"/>
    </location>
</feature>
<feature type="repeat" description="WD 1">
    <location>
        <begin position="60"/>
        <end position="102"/>
    </location>
</feature>
<feature type="repeat" description="WD 2">
    <location>
        <begin position="113"/>
        <end position="157"/>
    </location>
</feature>
<feature type="repeat" description="WD 3">
    <location>
        <begin position="185"/>
        <end position="224"/>
    </location>
</feature>
<feature type="repeat" description="WD 4">
    <location>
        <begin position="226"/>
        <end position="264"/>
    </location>
</feature>
<feature type="repeat" description="WD 5">
    <location>
        <begin position="268"/>
        <end position="309"/>
    </location>
</feature>
<feature type="repeat" description="WD 6">
    <location>
        <begin position="399"/>
        <end position="441"/>
    </location>
</feature>
<feature type="zinc finger region" description="C4-type" evidence="1">
    <location>
        <begin position="740"/>
        <end position="786"/>
    </location>
</feature>
<feature type="zinc finger region" description="RING-type; atypical" evidence="1">
    <location>
        <begin position="787"/>
        <end position="868"/>
    </location>
</feature>
<feature type="binding site" evidence="1">
    <location>
        <position position="742"/>
    </location>
    <ligand>
        <name>Zn(2+)</name>
        <dbReference type="ChEBI" id="CHEBI:29105"/>
        <label>1</label>
    </ligand>
</feature>
<feature type="binding site" evidence="1">
    <location>
        <position position="745"/>
    </location>
    <ligand>
        <name>Zn(2+)</name>
        <dbReference type="ChEBI" id="CHEBI:29105"/>
        <label>1</label>
    </ligand>
</feature>
<feature type="binding site" evidence="1">
    <location>
        <position position="780"/>
    </location>
    <ligand>
        <name>Zn(2+)</name>
        <dbReference type="ChEBI" id="CHEBI:29105"/>
        <label>1</label>
    </ligand>
</feature>
<feature type="binding site" evidence="1">
    <location>
        <position position="783"/>
    </location>
    <ligand>
        <name>Zn(2+)</name>
        <dbReference type="ChEBI" id="CHEBI:29105"/>
        <label>1</label>
    </ligand>
</feature>
<feature type="binding site" evidence="1">
    <location>
        <position position="793"/>
    </location>
    <ligand>
        <name>Zn(2+)</name>
        <dbReference type="ChEBI" id="CHEBI:29105"/>
        <label>2</label>
    </ligand>
</feature>
<feature type="binding site" evidence="1">
    <location>
        <position position="832"/>
    </location>
    <ligand>
        <name>Zn(2+)</name>
        <dbReference type="ChEBI" id="CHEBI:29105"/>
        <label>3</label>
    </ligand>
</feature>
<feature type="binding site" evidence="1">
    <location>
        <position position="835"/>
    </location>
    <ligand>
        <name>Zn(2+)</name>
        <dbReference type="ChEBI" id="CHEBI:29105"/>
        <label>3</label>
    </ligand>
</feature>
<feature type="binding site" evidence="1">
    <location>
        <position position="835"/>
    </location>
    <ligand>
        <name>Zn(2+)</name>
        <dbReference type="ChEBI" id="CHEBI:29105"/>
        <label>4</label>
    </ligand>
</feature>
<feature type="binding site" evidence="1">
    <location>
        <position position="837"/>
    </location>
    <ligand>
        <name>Zn(2+)</name>
        <dbReference type="ChEBI" id="CHEBI:29105"/>
        <label>4</label>
    </ligand>
</feature>
<feature type="binding site" evidence="1">
    <location>
        <position position="840"/>
    </location>
    <ligand>
        <name>Zn(2+)</name>
        <dbReference type="ChEBI" id="CHEBI:29105"/>
        <label>2</label>
    </ligand>
</feature>
<feature type="binding site" evidence="1">
    <location>
        <position position="843"/>
    </location>
    <ligand>
        <name>Zn(2+)</name>
        <dbReference type="ChEBI" id="CHEBI:29105"/>
        <label>2</label>
    </ligand>
</feature>
<feature type="binding site" evidence="1">
    <location>
        <position position="854"/>
    </location>
    <ligand>
        <name>Zn(2+)</name>
        <dbReference type="ChEBI" id="CHEBI:29105"/>
        <label>4</label>
    </ligand>
</feature>
<feature type="binding site" evidence="1">
    <location>
        <position position="859"/>
    </location>
    <ligand>
        <name>Zn(2+)</name>
        <dbReference type="ChEBI" id="CHEBI:29105"/>
        <label>4</label>
    </ligand>
</feature>
<feature type="binding site" evidence="1">
    <location>
        <position position="863"/>
    </location>
    <ligand>
        <name>Zn(2+)</name>
        <dbReference type="ChEBI" id="CHEBI:29105"/>
        <label>3</label>
    </ligand>
</feature>
<keyword id="KW-0458">Lysosome</keyword>
<keyword id="KW-0472">Membrane</keyword>
<keyword id="KW-0479">Metal-binding</keyword>
<keyword id="KW-1185">Reference proteome</keyword>
<keyword id="KW-0677">Repeat</keyword>
<keyword id="KW-0853">WD repeat</keyword>
<keyword id="KW-0862">Zinc</keyword>
<keyword id="KW-0863">Zinc-finger</keyword>
<sequence>MSGSKPDILWAPHHVDRFVVCDSELSLYHIESAASPSSELKAGSLRLSEETTATLLAINSDTPYMKCVAWYPKYDPECLLAVGQANGRVVLTSLGQDHNSKCKDLIGKEFVPKHARQCNTLAWNPQDSNWLAAGLDKHRADFSVLIWDISSKYTPEVAVPAEKVRLAPGDSETCSVVTKPLYELGQNDACLSLCWLPRDQKLLLAGMHRNLAIFDLRNTNQKMFVNTKAVQGVTVDPHFHDRVASFFEGQVAIWDLRKFEKPVLTLTEQPKPLTKVAWCPTRTGLLATLTRDSNIIRLYDMQHTPTPIGDETEPTIIERSVQPCDNYIASFAWHPTSQNRMVVVTPNRSMSDFTVFERISLAWSPTTSLMWACSRQLYECTEEGKGSSSLDRDIATKMRLRALSRYGLDTEQVWRNHLLAGNDDPQLKSLWYTLHFMKQYAEDIDQKSSGNKGLLVYAGIKAITKSSMGTTESFRHSWTGSDRQADIVHYSSEERCLALQLCGWRTKGADSDMGPFLNSLEQEGEWERAAAIALFNRDIRRAIQILNKGASTGKGNLNLNVVAMALSGYTDEKKSLWREMCSTLRLQLNNPYLCVMFAFLTSEPGVYDGVLYENSMAVRDRVAFSCLFLNDAQLSRYFDKLTNEMKEAGNLEGILLTGLTKDGVDLIESYVDRTGDVQTASYCMLQGSPSDVLKDERVQYWIESYRNLLDAWRFWHKRAEFDIHRSKLDPSSKPLAQVFVSCNFCGKSISYSCSSVPHQGRGFSQYGVSGSPTKSKFTSCPGCRKPLPRCALCLINMGNPVSSSPGASKSDEKVDLSKEKKVAKFNNWFTWCHNCRHGGHAGHMLSWFKDHSECPVSACSCKCMQLDTTGNLVPAENVQP</sequence>
<dbReference type="EMBL" id="BC084750">
    <property type="protein sequence ID" value="AAH84750.1"/>
    <property type="molecule type" value="mRNA"/>
</dbReference>
<dbReference type="RefSeq" id="NP_001088430.1">
    <property type="nucleotide sequence ID" value="NM_001094961.1"/>
</dbReference>
<dbReference type="RefSeq" id="XP_018124261.1">
    <property type="nucleotide sequence ID" value="XM_018268772.1"/>
</dbReference>
<dbReference type="SMR" id="Q5U5D4"/>
<dbReference type="DNASU" id="495294"/>
<dbReference type="GeneID" id="495294"/>
<dbReference type="KEGG" id="xla:495294"/>
<dbReference type="AGR" id="Xenbase:XB-GENE-5959781"/>
<dbReference type="CTD" id="495294"/>
<dbReference type="OMA" id="YWIASYL"/>
<dbReference type="OrthoDB" id="341486at2759"/>
<dbReference type="Proteomes" id="UP000186698">
    <property type="component" value="Chromosome 6S"/>
</dbReference>
<dbReference type="Bgee" id="495294">
    <property type="expression patterns" value="Expressed in neurula embryo and 19 other cell types or tissues"/>
</dbReference>
<dbReference type="GO" id="GO:0005737">
    <property type="term" value="C:cytoplasm"/>
    <property type="evidence" value="ECO:0000318"/>
    <property type="project" value="GO_Central"/>
</dbReference>
<dbReference type="GO" id="GO:0061700">
    <property type="term" value="C:GATOR2 complex"/>
    <property type="evidence" value="ECO:0000250"/>
    <property type="project" value="UniProtKB"/>
</dbReference>
<dbReference type="GO" id="GO:0005765">
    <property type="term" value="C:lysosomal membrane"/>
    <property type="evidence" value="ECO:0007669"/>
    <property type="project" value="UniProtKB-SubCell"/>
</dbReference>
<dbReference type="GO" id="GO:0008270">
    <property type="term" value="F:zinc ion binding"/>
    <property type="evidence" value="ECO:0007669"/>
    <property type="project" value="UniProtKB-KW"/>
</dbReference>
<dbReference type="GO" id="GO:0034198">
    <property type="term" value="P:cellular response to amino acid starvation"/>
    <property type="evidence" value="ECO:0000318"/>
    <property type="project" value="GO_Central"/>
</dbReference>
<dbReference type="GO" id="GO:0031669">
    <property type="term" value="P:cellular response to nutrient levels"/>
    <property type="evidence" value="ECO:0000250"/>
    <property type="project" value="UniProtKB"/>
</dbReference>
<dbReference type="GO" id="GO:1904263">
    <property type="term" value="P:positive regulation of TORC1 signaling"/>
    <property type="evidence" value="ECO:0000250"/>
    <property type="project" value="UniProtKB"/>
</dbReference>
<dbReference type="CDD" id="cd16691">
    <property type="entry name" value="mRING-H2-C3H3C2_Mio"/>
    <property type="match status" value="1"/>
</dbReference>
<dbReference type="FunFam" id="2.130.10.10:FF:000103">
    <property type="entry name" value="Meiosis regulator for oocyte development"/>
    <property type="match status" value="1"/>
</dbReference>
<dbReference type="Gene3D" id="2.130.10.10">
    <property type="entry name" value="YVTN repeat-like/Quinoprotein amine dehydrogenase"/>
    <property type="match status" value="1"/>
</dbReference>
<dbReference type="InterPro" id="IPR037593">
    <property type="entry name" value="MIOS/Sea4"/>
</dbReference>
<dbReference type="InterPro" id="IPR049092">
    <property type="entry name" value="MIOS_a-sol"/>
</dbReference>
<dbReference type="InterPro" id="IPR015943">
    <property type="entry name" value="WD40/YVTN_repeat-like_dom_sf"/>
</dbReference>
<dbReference type="InterPro" id="IPR036322">
    <property type="entry name" value="WD40_repeat_dom_sf"/>
</dbReference>
<dbReference type="InterPro" id="IPR001680">
    <property type="entry name" value="WD40_rpt"/>
</dbReference>
<dbReference type="InterPro" id="IPR031488">
    <property type="entry name" value="Zn_ribbon_mio"/>
</dbReference>
<dbReference type="PANTHER" id="PTHR16453:SF9">
    <property type="entry name" value="GATOR COMPLEX PROTEIN MIOS"/>
    <property type="match status" value="1"/>
</dbReference>
<dbReference type="PANTHER" id="PTHR16453">
    <property type="entry name" value="WD40 DOMAIN-CONTAINING PROTEIN MIO FAMILY MEMBER"/>
    <property type="match status" value="1"/>
</dbReference>
<dbReference type="Pfam" id="PF21719">
    <property type="entry name" value="MIOS_a-sol"/>
    <property type="match status" value="1"/>
</dbReference>
<dbReference type="Pfam" id="PF21720">
    <property type="entry name" value="MIOS_WD40"/>
    <property type="match status" value="1"/>
</dbReference>
<dbReference type="Pfam" id="PF17034">
    <property type="entry name" value="zinc_ribbon_16"/>
    <property type="match status" value="1"/>
</dbReference>
<dbReference type="SMART" id="SM00320">
    <property type="entry name" value="WD40"/>
    <property type="match status" value="4"/>
</dbReference>
<dbReference type="SUPFAM" id="SSF50978">
    <property type="entry name" value="WD40 repeat-like"/>
    <property type="match status" value="1"/>
</dbReference>
<reference key="1">
    <citation type="submission" date="2004-10" db="EMBL/GenBank/DDBJ databases">
        <authorList>
            <consortium name="NIH - Xenopus Gene Collection (XGC) project"/>
        </authorList>
    </citation>
    <scope>NUCLEOTIDE SEQUENCE [LARGE SCALE MRNA]</scope>
    <source>
        <tissue>Embryo</tissue>
    </source>
</reference>
<accession>Q5U5D4</accession>
<proteinExistence type="evidence at transcript level"/>
<comment type="function">
    <text evidence="1">As a component of the GATOR2 complex, functions as an activator of the amino acid-sensing branch of the mTORC1 signaling pathway. The GATOR2 complex indirectly activates mTORC1 through the inhibition of the GATOR1 subcomplex. GATOR2 probably acts as an E3 ubiquitin-protein ligase toward GATOR1. In the presence of abundant amino acids, the GATOR2 complex mediates ubiquitination of the NPRL2 core component of the GATOR1 complex, leading to GATOR1 inactivation. In the absence of amino acids, GATOR2 is inhibited, activating the GATOR1 complex. Within the GATOR2 complex, MIOS is required to prevent autoubiquitination of WDR24, the catalytic subunit of the complex.</text>
</comment>
<comment type="activity regulation">
    <text evidence="1">The GATOR2 complex is negatively regulated by the upstream amino acid sensors CASTOR1 and SESN2, which sequester the GATOR2 complex in absence of amino acids. In the presence of abundant amino acids, GATOR2 is released from CASTOR1 and SESN2 and activated.</text>
</comment>
<comment type="subunit">
    <text evidence="1">Component of the GATOR2 subcomplex, composed of MIOS, SEC13, SEH1L, WDR24 and WDR59. The GATOR2 complex interacts with CASTOR1 and CASTOR2; the interaction is negatively regulated by arginine. The GATOR2 complex interacts with SESN1, SESN2 and SESN3; the interaction is negatively regulated by amino acids. Interacts with SAR1; the interaction is direct, disrupted by leucine and mediates the interaction of SAR1 with the GATOR2 complex to negatively regulate the TORC1 signaling upon leucine deprivation (By similarity).</text>
</comment>
<comment type="subcellular location">
    <subcellularLocation>
        <location evidence="1">Lysosome membrane</location>
    </subcellularLocation>
</comment>
<comment type="similarity">
    <text evidence="2">Belongs to the WD repeat mio family.</text>
</comment>
<evidence type="ECO:0000250" key="1">
    <source>
        <dbReference type="UniProtKB" id="Q9NXC5"/>
    </source>
</evidence>
<evidence type="ECO:0000305" key="2"/>
<gene>
    <name evidence="2" type="primary">mios-a</name>
</gene>
<name>MIOSA_XENLA</name>
<protein>
    <recommendedName>
        <fullName evidence="2">GATOR2 complex protein MIOS-A</fullName>
    </recommendedName>
</protein>
<organism>
    <name type="scientific">Xenopus laevis</name>
    <name type="common">African clawed frog</name>
    <dbReference type="NCBI Taxonomy" id="8355"/>
    <lineage>
        <taxon>Eukaryota</taxon>
        <taxon>Metazoa</taxon>
        <taxon>Chordata</taxon>
        <taxon>Craniata</taxon>
        <taxon>Vertebrata</taxon>
        <taxon>Euteleostomi</taxon>
        <taxon>Amphibia</taxon>
        <taxon>Batrachia</taxon>
        <taxon>Anura</taxon>
        <taxon>Pipoidea</taxon>
        <taxon>Pipidae</taxon>
        <taxon>Xenopodinae</taxon>
        <taxon>Xenopus</taxon>
        <taxon>Xenopus</taxon>
    </lineage>
</organism>